<feature type="chain" id="PRO_0000054068" description="A-type voltage-gated potassium channel KCND3">
    <location>
        <begin position="1"/>
        <end position="655"/>
    </location>
</feature>
<feature type="topological domain" description="Cytoplasmic" evidence="27">
    <location>
        <begin position="1"/>
        <end position="182"/>
    </location>
</feature>
<feature type="transmembrane region" description="Helical; Name=Segment S1" evidence="20 30">
    <location>
        <begin position="183"/>
        <end position="204"/>
    </location>
</feature>
<feature type="topological domain" description="Extracellular" evidence="27">
    <location>
        <begin position="205"/>
        <end position="223"/>
    </location>
</feature>
<feature type="transmembrane region" description="Helical; Name=Segment S2" evidence="20 30">
    <location>
        <begin position="224"/>
        <end position="246"/>
    </location>
</feature>
<feature type="topological domain" description="Cytoplasmic" evidence="27">
    <location>
        <begin position="247"/>
        <end position="253"/>
    </location>
</feature>
<feature type="transmembrane region" description="Helical; Name=Segment S3" evidence="20 30">
    <location>
        <begin position="254"/>
        <end position="277"/>
    </location>
</feature>
<feature type="topological domain" description="Extracellular" evidence="27">
    <location>
        <begin position="278"/>
        <end position="283"/>
    </location>
</feature>
<feature type="transmembrane region" description="Helical; Voltage-sensor; Name=Segment S4" evidence="20 30">
    <location>
        <begin position="284"/>
        <end position="306"/>
    </location>
</feature>
<feature type="topological domain" description="Cytoplasmic" evidence="27">
    <location>
        <begin position="307"/>
        <end position="318"/>
    </location>
</feature>
<feature type="transmembrane region" description="Helical; Name=Segment S5" evidence="20 30">
    <location>
        <begin position="319"/>
        <end position="343"/>
    </location>
</feature>
<feature type="topological domain" description="Extracellular" evidence="27">
    <location>
        <begin position="344"/>
        <end position="352"/>
    </location>
</feature>
<feature type="intramembrane region" description="Helical; Name=Pore helix" evidence="20 30">
    <location>
        <begin position="353"/>
        <end position="366"/>
    </location>
</feature>
<feature type="intramembrane region" evidence="1">
    <location>
        <begin position="367"/>
        <end position="374"/>
    </location>
</feature>
<feature type="transmembrane region" description="Helical; Name=Segment S6" evidence="20 30">
    <location>
        <begin position="378"/>
        <end position="400"/>
    </location>
</feature>
<feature type="topological domain" description="Cytoplasmic" evidence="27">
    <location>
        <begin position="401"/>
        <end position="655"/>
    </location>
</feature>
<feature type="region of interest" description="Interaction with KCNIP1 and KCNIP2" evidence="13 20">
    <location>
        <begin position="6"/>
        <end position="21"/>
    </location>
</feature>
<feature type="region of interest" description="Interaction with KCNIP1" evidence="13">
    <location>
        <begin position="70"/>
        <end position="78"/>
    </location>
</feature>
<feature type="region of interest" description="Interaction with KCNIP1 and KCNIP2" evidence="20">
    <location>
        <begin position="470"/>
        <end position="487"/>
    </location>
</feature>
<feature type="region of interest" description="Mediates dendritic targeting" evidence="3">
    <location>
        <begin position="472"/>
        <end position="487"/>
    </location>
</feature>
<feature type="region of interest" description="Disordered" evidence="7">
    <location>
        <begin position="525"/>
        <end position="565"/>
    </location>
</feature>
<feature type="region of interest" description="Disordered" evidence="7">
    <location>
        <begin position="615"/>
        <end position="655"/>
    </location>
</feature>
<feature type="short sequence motif" description="Selectivity filter" evidence="1">
    <location>
        <begin position="367"/>
        <end position="372"/>
    </location>
</feature>
<feature type="compositionally biased region" description="Polar residues" evidence="7">
    <location>
        <begin position="525"/>
        <end position="548"/>
    </location>
</feature>
<feature type="compositionally biased region" description="Polar residues" evidence="7">
    <location>
        <begin position="637"/>
        <end position="647"/>
    </location>
</feature>
<feature type="binding site" description="in chain B" evidence="28 29">
    <location>
        <position position="104"/>
    </location>
    <ligand>
        <name>Zn(2+)</name>
        <dbReference type="ChEBI" id="CHEBI:29105"/>
        <note>ligand shared between homodimeric partners</note>
    </ligand>
</feature>
<feature type="binding site" description="in chain D" evidence="28 29">
    <location>
        <position position="110"/>
    </location>
    <ligand>
        <name>Zn(2+)</name>
        <dbReference type="ChEBI" id="CHEBI:29105"/>
        <note>ligand shared between homodimeric partners</note>
    </ligand>
</feature>
<feature type="binding site" description="in chain B" evidence="28 29">
    <location>
        <position position="131"/>
    </location>
    <ligand>
        <name>Zn(2+)</name>
        <dbReference type="ChEBI" id="CHEBI:29105"/>
        <note>ligand shared between homodimeric partners</note>
    </ligand>
</feature>
<feature type="binding site" description="in chain B" evidence="28 29">
    <location>
        <position position="132"/>
    </location>
    <ligand>
        <name>Zn(2+)</name>
        <dbReference type="ChEBI" id="CHEBI:29105"/>
        <note>ligand shared between homodimeric partners</note>
    </ligand>
</feature>
<feature type="binding site" evidence="4">
    <location>
        <position position="367"/>
    </location>
    <ligand>
        <name>K(+)</name>
        <dbReference type="ChEBI" id="CHEBI:29103"/>
        <note>ligand shared between homotetrameric partners</note>
    </ligand>
</feature>
<feature type="binding site" evidence="4">
    <location>
        <position position="368"/>
    </location>
    <ligand>
        <name>K(+)</name>
        <dbReference type="ChEBI" id="CHEBI:29103"/>
        <note>ligand shared between homotetrameric partners</note>
    </ligand>
</feature>
<feature type="binding site" evidence="4">
    <location>
        <position position="369"/>
    </location>
    <ligand>
        <name>K(+)</name>
        <dbReference type="ChEBI" id="CHEBI:29103"/>
        <note>ligand shared between homotetrameric partners</note>
    </ligand>
</feature>
<feature type="binding site" evidence="4">
    <location>
        <position position="370"/>
    </location>
    <ligand>
        <name>K(+)</name>
        <dbReference type="ChEBI" id="CHEBI:29103"/>
        <note>ligand shared between homotetrameric partners</note>
    </ligand>
</feature>
<feature type="modified residue" description="Phosphoserine" evidence="5">
    <location>
        <position position="153"/>
    </location>
</feature>
<feature type="modified residue" description="Phosphothreonine" evidence="5">
    <location>
        <position position="459"/>
    </location>
</feature>
<feature type="modified residue" description="Phosphoserine; by CaMK2D" evidence="2">
    <location>
        <position position="569"/>
    </location>
</feature>
<feature type="modified residue" description="Phosphoserine" evidence="5">
    <location>
        <position position="585"/>
    </location>
</feature>
<feature type="splice variant" id="VSP_008826" description="In isoform 2." evidence="22 23 24 25">
    <location>
        <begin position="488"/>
        <end position="506"/>
    </location>
</feature>
<feature type="sequence variant" id="VAR_035775" description="In a colorectal cancer sample; somatic mutation; dbSNP:rs1349469134." evidence="12">
    <original>V</original>
    <variation>M</variation>
    <location>
        <position position="94"/>
    </location>
</feature>
<feature type="sequence variant" id="VAR_070785" description="In SCA19; results in reduced channel activity consistent with impaired cell surface expression of the mutant protein." evidence="17">
    <location>
        <position position="227"/>
    </location>
</feature>
<feature type="sequence variant" id="VAR_070786" description="In SCA19." evidence="17">
    <original>V</original>
    <variation>E</variation>
    <location>
        <position position="338"/>
    </location>
</feature>
<feature type="sequence variant" id="VAR_070787" description="In SCA19; dbSNP:rs797045634." evidence="17">
    <original>G</original>
    <variation>V</variation>
    <location>
        <position position="345"/>
    </location>
</feature>
<feature type="sequence variant" id="VAR_070788" description="In SCA19; loss of channel activity; dbSNP:rs397515476." evidence="18">
    <original>T</original>
    <variation>P</variation>
    <location>
        <position position="352"/>
    </location>
</feature>
<feature type="sequence variant" id="VAR_070789" description="In SCA19; uncertain significance; causes reduced channel activity; dbSNP:rs397515477." evidence="18">
    <original>M</original>
    <variation>I</variation>
    <location>
        <position position="373"/>
    </location>
</feature>
<feature type="sequence variant" id="VAR_070790" description="In SCA19." evidence="17">
    <original>T</original>
    <variation>M</variation>
    <location>
        <position position="377"/>
    </location>
</feature>
<feature type="sequence variant" id="VAR_079709" description="In SCA19." evidence="19">
    <original>G</original>
    <variation>S</variation>
    <location>
        <position position="384"/>
    </location>
</feature>
<feature type="sequence variant" id="VAR_070791" description="In SCA19; uncertain significance; results in impaired cell surface expression; dbSNP:rs397515478." evidence="18">
    <original>S</original>
    <variation>N</variation>
    <location>
        <position position="390"/>
    </location>
</feature>
<feature type="sequence variant" id="VAR_067694" description="In BRGDA9; uncertain significance; gain of function mutation; dbSNP:rs786205867." evidence="16">
    <original>V</original>
    <variation>I</variation>
    <location>
        <position position="392"/>
    </location>
</feature>
<feature type="sequence variant" id="VAR_073831" description="In BRGDA9; uncertain significance; gain of function mutation; dbSNP:rs150401343." evidence="15">
    <original>L</original>
    <variation>F</variation>
    <location>
        <position position="450"/>
    </location>
</feature>
<feature type="sequence variant" id="VAR_067695" description="In BRGDA9; uncertain significance; does not affect the electrophysiological properties of the channel." evidence="16">
    <original>S</original>
    <variation>R</variation>
    <location>
        <position position="530"/>
    </location>
</feature>
<feature type="sequence variant" id="VAR_067696" description="In BRGDA9; uncertain significance; gain of function mutation; dbSNP:rs149344567." evidence="15 16">
    <original>G</original>
    <variation>R</variation>
    <location>
        <position position="600"/>
    </location>
</feature>
<feature type="sequence conflict" description="In Ref. 1; AAC05121/AAC05122 and 4; AAD38898." evidence="26" ref="1 4">
    <original>V</original>
    <variation>G</variation>
    <location>
        <position position="239"/>
    </location>
</feature>
<feature type="sequence conflict" description="In Ref. 1; AAC05121/AAC05122 and 4; AAD38898." evidence="26" ref="1 4">
    <original>P</original>
    <variation>L</variation>
    <location>
        <position position="375"/>
    </location>
</feature>
<feature type="sequence conflict" description="In Ref. 2; AAF01044/AAF01045." evidence="26" ref="2">
    <original>R</original>
    <variation>G</variation>
    <location>
        <position position="408"/>
    </location>
</feature>
<feature type="sequence conflict" description="In Ref. 2; AAF01044/AAF01045." evidence="26" ref="2">
    <original>E</original>
    <variation>G</variation>
    <location>
        <position position="452"/>
    </location>
</feature>
<feature type="sequence conflict" description="In Ref. 2; AAF01044/AAF01045." evidence="26" ref="2">
    <original>T</original>
    <variation>Q</variation>
    <location>
        <position position="531"/>
    </location>
</feature>
<feature type="sequence conflict" description="In Ref. 2; AAF01044/AAF01045." evidence="26" ref="2">
    <original>A</original>
    <variation>D</variation>
    <location>
        <position position="564"/>
    </location>
</feature>
<feature type="sequence conflict" description="In Ref. 1; AAC05121/AAC05122, 2; AAF01045 and 4; AAD38898." evidence="26" ref="1 2 4">
    <original>A</original>
    <variation>T</variation>
    <location>
        <position position="646"/>
    </location>
</feature>
<feature type="sequence conflict" description="In Ref. 1; AAC05121/AAC05122, 2; AAF01044 and 4; AAD38898." evidence="26" ref="1 2 4">
    <original>A</original>
    <variation>V</variation>
    <location>
        <position position="654"/>
    </location>
</feature>
<feature type="helix" evidence="37">
    <location>
        <begin position="4"/>
        <end position="6"/>
    </location>
</feature>
<feature type="helix" evidence="38">
    <location>
        <begin position="9"/>
        <end position="15"/>
    </location>
</feature>
<feature type="helix" evidence="38">
    <location>
        <begin position="16"/>
        <end position="18"/>
    </location>
</feature>
<feature type="strand" evidence="35">
    <location>
        <begin position="20"/>
        <end position="23"/>
    </location>
</feature>
<feature type="helix" evidence="35">
    <location>
        <begin position="32"/>
        <end position="34"/>
    </location>
</feature>
<feature type="strand" evidence="34">
    <location>
        <begin position="41"/>
        <end position="46"/>
    </location>
</feature>
<feature type="strand" evidence="34">
    <location>
        <begin position="49"/>
        <end position="54"/>
    </location>
</feature>
<feature type="helix" evidence="34">
    <location>
        <begin position="55"/>
        <end position="58"/>
    </location>
</feature>
<feature type="turn" evidence="38">
    <location>
        <begin position="65"/>
        <end position="67"/>
    </location>
</feature>
<feature type="helix" evidence="34">
    <location>
        <begin position="70"/>
        <end position="73"/>
    </location>
</feature>
<feature type="strand" evidence="35">
    <location>
        <begin position="74"/>
        <end position="76"/>
    </location>
</feature>
<feature type="strand" evidence="34">
    <location>
        <begin position="77"/>
        <end position="79"/>
    </location>
</feature>
<feature type="strand" evidence="34">
    <location>
        <begin position="81"/>
        <end position="84"/>
    </location>
</feature>
<feature type="helix" evidence="34">
    <location>
        <begin position="88"/>
        <end position="100"/>
    </location>
</feature>
<feature type="strand" evidence="35">
    <location>
        <begin position="101"/>
        <end position="103"/>
    </location>
</feature>
<feature type="strand" evidence="36">
    <location>
        <begin position="107"/>
        <end position="109"/>
    </location>
</feature>
<feature type="helix" evidence="34">
    <location>
        <begin position="111"/>
        <end position="120"/>
    </location>
</feature>
<feature type="helix" evidence="34">
    <location>
        <begin position="125"/>
        <end position="127"/>
    </location>
</feature>
<feature type="helix" evidence="34">
    <location>
        <begin position="130"/>
        <end position="144"/>
    </location>
</feature>
<feature type="turn" evidence="38">
    <location>
        <begin position="164"/>
        <end position="166"/>
    </location>
</feature>
<feature type="helix" evidence="38">
    <location>
        <begin position="167"/>
        <end position="173"/>
    </location>
</feature>
<feature type="turn" evidence="36">
    <location>
        <begin position="176"/>
        <end position="178"/>
    </location>
</feature>
<feature type="helix" evidence="38">
    <location>
        <begin position="180"/>
        <end position="202"/>
    </location>
</feature>
<feature type="helix" evidence="38">
    <location>
        <begin position="218"/>
        <end position="221"/>
    </location>
</feature>
<feature type="helix" evidence="38">
    <location>
        <begin position="223"/>
        <end position="246"/>
    </location>
</feature>
<feature type="turn" evidence="38">
    <location>
        <begin position="251"/>
        <end position="256"/>
    </location>
</feature>
<feature type="helix" evidence="38">
    <location>
        <begin position="258"/>
        <end position="275"/>
    </location>
</feature>
<feature type="helix" evidence="38">
    <location>
        <begin position="278"/>
        <end position="280"/>
    </location>
</feature>
<feature type="turn" evidence="38">
    <location>
        <begin position="283"/>
        <end position="286"/>
    </location>
</feature>
<feature type="helix" evidence="38">
    <location>
        <begin position="287"/>
        <end position="291"/>
    </location>
</feature>
<feature type="helix" evidence="38">
    <location>
        <begin position="292"/>
        <end position="302"/>
    </location>
</feature>
<feature type="helix" evidence="38">
    <location>
        <begin position="305"/>
        <end position="316"/>
    </location>
</feature>
<feature type="helix" evidence="38">
    <location>
        <begin position="318"/>
        <end position="343"/>
    </location>
</feature>
<feature type="strand" evidence="38">
    <location>
        <begin position="344"/>
        <end position="348"/>
    </location>
</feature>
<feature type="helix" evidence="38">
    <location>
        <begin position="356"/>
        <end position="365"/>
    </location>
</feature>
<feature type="strand" evidence="38">
    <location>
        <begin position="371"/>
        <end position="373"/>
    </location>
</feature>
<feature type="helix" evidence="38">
    <location>
        <begin position="378"/>
        <end position="395"/>
    </location>
</feature>
<feature type="helix" evidence="38">
    <location>
        <begin position="398"/>
        <end position="445"/>
    </location>
</feature>
<feature type="helix" evidence="38">
    <location>
        <begin position="473"/>
        <end position="483"/>
    </location>
</feature>
<reference key="1">
    <citation type="journal article" date="1998" name="Am. J. Physiol.">
        <title>Isolation and characterization of the human gene encoding Ito: further diversity by alternative mRNA splicing.</title>
        <authorList>
            <person name="Kong W."/>
            <person name="Po S."/>
            <person name="Yamagishi T."/>
            <person name="Ashen M.D."/>
            <person name="Stetten G."/>
            <person name="Tomaselli G.F."/>
        </authorList>
    </citation>
    <scope>NUCLEOTIDE SEQUENCE [MRNA] (ISOFORMS 1 AND 2)</scope>
    <scope>FUNCTION</scope>
    <scope>TRANSPORTER ACTIVITY</scope>
    <scope>TISSUE SPECIFICITY</scope>
    <source>
        <tissue>Heart</tissue>
    </source>
</reference>
<reference key="2">
    <citation type="journal article" date="1999" name="J. Neurophysiol.">
        <title>Cloning and expression of the human Kv4.3 potassium channel.</title>
        <authorList>
            <person name="Dilks D."/>
            <person name="Ling H.-P."/>
            <person name="Cockett M."/>
            <person name="Sokol P."/>
            <person name="Numann R."/>
        </authorList>
    </citation>
    <scope>NUCLEOTIDE SEQUENCE [MRNA] (ISOFORMS 1 AND 2)</scope>
    <scope>FUNCTION</scope>
    <scope>TRANSPORTER ACTIVITY</scope>
    <scope>TISSUE SPECIFICITY</scope>
    <source>
        <tissue>Brain</tissue>
        <tissue>Heart</tissue>
    </source>
</reference>
<reference key="3">
    <citation type="submission" date="1999-11" db="EMBL/GenBank/DDBJ databases">
        <title>Long and short human isoforms of the Kv4.3 channel: cloning, expression, electrophysiology, pharmacology and phosphorylation by protein kinase C.</title>
        <authorList>
            <person name="Calmels T.P.G."/>
            <person name="Faivre J.-F."/>
            <person name="Javre J.-L."/>
            <person name="Cheval B."/>
            <person name="Rouanet S."/>
            <person name="Bril A."/>
        </authorList>
    </citation>
    <scope>NUCLEOTIDE SEQUENCE [MRNA]</scope>
    <source>
        <tissue>Heart</tissue>
    </source>
</reference>
<reference key="4">
    <citation type="journal article" date="2000" name="Genomics">
        <title>Gene structures and expression profiles of three human KCND (Kv4) potassium channels mediating A-type currents I(TO) and I(SA).</title>
        <authorList>
            <person name="Isbrandt D."/>
            <person name="Leicher T."/>
            <person name="Waldschuetz R."/>
            <person name="Zhu X.-R."/>
            <person name="Luhmann U."/>
            <person name="Michel U."/>
            <person name="Sauter K."/>
            <person name="Pongs O."/>
        </authorList>
    </citation>
    <scope>NUCLEOTIDE SEQUENCE [GENOMIC DNA / MRNA] (ISOFORMS 1 AND 2)</scope>
    <scope>TISSUE SPECIFICITY</scope>
    <source>
        <tissue>Brain cortex</tissue>
    </source>
</reference>
<reference key="5">
    <citation type="journal article" date="2006" name="Nature">
        <title>The DNA sequence and biological annotation of human chromosome 1.</title>
        <authorList>
            <person name="Gregory S.G."/>
            <person name="Barlow K.F."/>
            <person name="McLay K.E."/>
            <person name="Kaul R."/>
            <person name="Swarbreck D."/>
            <person name="Dunham A."/>
            <person name="Scott C.E."/>
            <person name="Howe K.L."/>
            <person name="Woodfine K."/>
            <person name="Spencer C.C.A."/>
            <person name="Jones M.C."/>
            <person name="Gillson C."/>
            <person name="Searle S."/>
            <person name="Zhou Y."/>
            <person name="Kokocinski F."/>
            <person name="McDonald L."/>
            <person name="Evans R."/>
            <person name="Phillips K."/>
            <person name="Atkinson A."/>
            <person name="Cooper R."/>
            <person name="Jones C."/>
            <person name="Hall R.E."/>
            <person name="Andrews T.D."/>
            <person name="Lloyd C."/>
            <person name="Ainscough R."/>
            <person name="Almeida J.P."/>
            <person name="Ambrose K.D."/>
            <person name="Anderson F."/>
            <person name="Andrew R.W."/>
            <person name="Ashwell R.I.S."/>
            <person name="Aubin K."/>
            <person name="Babbage A.K."/>
            <person name="Bagguley C.L."/>
            <person name="Bailey J."/>
            <person name="Beasley H."/>
            <person name="Bethel G."/>
            <person name="Bird C.P."/>
            <person name="Bray-Allen S."/>
            <person name="Brown J.Y."/>
            <person name="Brown A.J."/>
            <person name="Buckley D."/>
            <person name="Burton J."/>
            <person name="Bye J."/>
            <person name="Carder C."/>
            <person name="Chapman J.C."/>
            <person name="Clark S.Y."/>
            <person name="Clarke G."/>
            <person name="Clee C."/>
            <person name="Cobley V."/>
            <person name="Collier R.E."/>
            <person name="Corby N."/>
            <person name="Coville G.J."/>
            <person name="Davies J."/>
            <person name="Deadman R."/>
            <person name="Dunn M."/>
            <person name="Earthrowl M."/>
            <person name="Ellington A.G."/>
            <person name="Errington H."/>
            <person name="Frankish A."/>
            <person name="Frankland J."/>
            <person name="French L."/>
            <person name="Garner P."/>
            <person name="Garnett J."/>
            <person name="Gay L."/>
            <person name="Ghori M.R.J."/>
            <person name="Gibson R."/>
            <person name="Gilby L.M."/>
            <person name="Gillett W."/>
            <person name="Glithero R.J."/>
            <person name="Grafham D.V."/>
            <person name="Griffiths C."/>
            <person name="Griffiths-Jones S."/>
            <person name="Grocock R."/>
            <person name="Hammond S."/>
            <person name="Harrison E.S.I."/>
            <person name="Hart E."/>
            <person name="Haugen E."/>
            <person name="Heath P.D."/>
            <person name="Holmes S."/>
            <person name="Holt K."/>
            <person name="Howden P.J."/>
            <person name="Hunt A.R."/>
            <person name="Hunt S.E."/>
            <person name="Hunter G."/>
            <person name="Isherwood J."/>
            <person name="James R."/>
            <person name="Johnson C."/>
            <person name="Johnson D."/>
            <person name="Joy A."/>
            <person name="Kay M."/>
            <person name="Kershaw J.K."/>
            <person name="Kibukawa M."/>
            <person name="Kimberley A.M."/>
            <person name="King A."/>
            <person name="Knights A.J."/>
            <person name="Lad H."/>
            <person name="Laird G."/>
            <person name="Lawlor S."/>
            <person name="Leongamornlert D.A."/>
            <person name="Lloyd D.M."/>
            <person name="Loveland J."/>
            <person name="Lovell J."/>
            <person name="Lush M.J."/>
            <person name="Lyne R."/>
            <person name="Martin S."/>
            <person name="Mashreghi-Mohammadi M."/>
            <person name="Matthews L."/>
            <person name="Matthews N.S.W."/>
            <person name="McLaren S."/>
            <person name="Milne S."/>
            <person name="Mistry S."/>
            <person name="Moore M.J.F."/>
            <person name="Nickerson T."/>
            <person name="O'Dell C.N."/>
            <person name="Oliver K."/>
            <person name="Palmeiri A."/>
            <person name="Palmer S.A."/>
            <person name="Parker A."/>
            <person name="Patel D."/>
            <person name="Pearce A.V."/>
            <person name="Peck A.I."/>
            <person name="Pelan S."/>
            <person name="Phelps K."/>
            <person name="Phillimore B.J."/>
            <person name="Plumb R."/>
            <person name="Rajan J."/>
            <person name="Raymond C."/>
            <person name="Rouse G."/>
            <person name="Saenphimmachak C."/>
            <person name="Sehra H.K."/>
            <person name="Sheridan E."/>
            <person name="Shownkeen R."/>
            <person name="Sims S."/>
            <person name="Skuce C.D."/>
            <person name="Smith M."/>
            <person name="Steward C."/>
            <person name="Subramanian S."/>
            <person name="Sycamore N."/>
            <person name="Tracey A."/>
            <person name="Tromans A."/>
            <person name="Van Helmond Z."/>
            <person name="Wall M."/>
            <person name="Wallis J.M."/>
            <person name="White S."/>
            <person name="Whitehead S.L."/>
            <person name="Wilkinson J.E."/>
            <person name="Willey D.L."/>
            <person name="Williams H."/>
            <person name="Wilming L."/>
            <person name="Wray P.W."/>
            <person name="Wu Z."/>
            <person name="Coulson A."/>
            <person name="Vaudin M."/>
            <person name="Sulston J.E."/>
            <person name="Durbin R.M."/>
            <person name="Hubbard T."/>
            <person name="Wooster R."/>
            <person name="Dunham I."/>
            <person name="Carter N.P."/>
            <person name="McVean G."/>
            <person name="Ross M.T."/>
            <person name="Harrow J."/>
            <person name="Olson M.V."/>
            <person name="Beck S."/>
            <person name="Rogers J."/>
            <person name="Bentley D.R."/>
        </authorList>
    </citation>
    <scope>NUCLEOTIDE SEQUENCE [LARGE SCALE GENOMIC DNA]</scope>
</reference>
<reference key="6">
    <citation type="submission" date="2005-07" db="EMBL/GenBank/DDBJ databases">
        <authorList>
            <person name="Mural R.J."/>
            <person name="Istrail S."/>
            <person name="Sutton G."/>
            <person name="Florea L."/>
            <person name="Halpern A.L."/>
            <person name="Mobarry C.M."/>
            <person name="Lippert R."/>
            <person name="Walenz B."/>
            <person name="Shatkay H."/>
            <person name="Dew I."/>
            <person name="Miller J.R."/>
            <person name="Flanigan M.J."/>
            <person name="Edwards N.J."/>
            <person name="Bolanos R."/>
            <person name="Fasulo D."/>
            <person name="Halldorsson B.V."/>
            <person name="Hannenhalli S."/>
            <person name="Turner R."/>
            <person name="Yooseph S."/>
            <person name="Lu F."/>
            <person name="Nusskern D.R."/>
            <person name="Shue B.C."/>
            <person name="Zheng X.H."/>
            <person name="Zhong F."/>
            <person name="Delcher A.L."/>
            <person name="Huson D.H."/>
            <person name="Kravitz S.A."/>
            <person name="Mouchard L."/>
            <person name="Reinert K."/>
            <person name="Remington K.A."/>
            <person name="Clark A.G."/>
            <person name="Waterman M.S."/>
            <person name="Eichler E.E."/>
            <person name="Adams M.D."/>
            <person name="Hunkapiller M.W."/>
            <person name="Myers E.W."/>
            <person name="Venter J.C."/>
        </authorList>
    </citation>
    <scope>NUCLEOTIDE SEQUENCE [LARGE SCALE GENOMIC DNA]</scope>
</reference>
<reference key="7">
    <citation type="journal article" date="2004" name="Genome Res.">
        <title>The status, quality, and expansion of the NIH full-length cDNA project: the Mammalian Gene Collection (MGC).</title>
        <authorList>
            <consortium name="The MGC Project Team"/>
        </authorList>
    </citation>
    <scope>NUCLEOTIDE SEQUENCE [LARGE SCALE MRNA] (ISOFORM 2)</scope>
    <source>
        <tissue>Heart</tissue>
        <tissue>Lung</tissue>
    </source>
</reference>
<reference key="8">
    <citation type="journal article" date="2002" name="FEBS Lett.">
        <title>Modulation of Kv4.3 current by accessory subunits.</title>
        <authorList>
            <person name="Deschenes I."/>
            <person name="Tomaselli G.F."/>
        </authorList>
    </citation>
    <scope>INTERACTION WITH KCNIP2; KCNE1; KCNE2; SCN1B AND KCNAB1</scope>
</reference>
<reference key="9">
    <citation type="journal article" date="2009" name="Circ. Res.">
        <title>Kv4 potassium channels form a tripartite complex with the anchoring protein SAP97 and CaMKII in cardiac myocytes.</title>
        <authorList>
            <person name="El-Haou S."/>
            <person name="Balse E."/>
            <person name="Neyroud N."/>
            <person name="Dilanian G."/>
            <person name="Gavillet B."/>
            <person name="Abriel H."/>
            <person name="Coulombe A."/>
            <person name="Jeromin A."/>
            <person name="Hatem S.N."/>
        </authorList>
    </citation>
    <scope>INTERACTION WITH DLG1</scope>
</reference>
<reference key="10">
    <citation type="journal article" date="2011" name="Heart Rhythm">
        <title>Transient outward current (I(to)) gain-of-function mutations in the KCND3-encoded Kv4.3 potassium channel and Brugada syndrome.</title>
        <authorList>
            <person name="Giudicessi J.R."/>
            <person name="Ye D."/>
            <person name="Tester D.J."/>
            <person name="Crotti L."/>
            <person name="Mugione A."/>
            <person name="Nesterenko V.V."/>
            <person name="Albertson R.M."/>
            <person name="Antzelevitch C."/>
            <person name="Schwartz P.J."/>
            <person name="Ackerman M.J."/>
        </authorList>
    </citation>
    <scope>INVOLVEMENT IN BRGDA9</scope>
    <scope>VARIANTS BRGDA9 PHE-450 AND ARG-600</scope>
    <scope>CHARACTERIZATION OF VARIANT BRGDA9 PHE-450</scope>
    <scope>FUNCTION</scope>
    <scope>TRANSPORTER ACTIVITY</scope>
</reference>
<reference key="11">
    <citation type="journal article" date="2012" name="Hum. Mutat.">
        <title>Novel mutations in the KCND3-encoded Kv4.3 K+ channel associated with autopsy-negative sudden unexplained death.</title>
        <authorList>
            <person name="Giudicessi J.R."/>
            <person name="Ye D."/>
            <person name="Kritzberger C.J."/>
            <person name="Nesterenko V.V."/>
            <person name="Tester D.J."/>
            <person name="Antzelevitch C."/>
            <person name="Ackerman M.J."/>
        </authorList>
    </citation>
    <scope>INVOLVEMENT IN BRGDA9</scope>
    <scope>VARIANTS BRGDA9 ILE-392; ARG-530 AND ARG-600</scope>
    <scope>CHARACTERIZATION OF VARIANTS BRGDA9 ILE-392; ARG-530 AND ARG-600</scope>
    <scope>FUNCTION</scope>
    <scope>TRANSPORTER ACTIVITY</scope>
</reference>
<reference evidence="28" key="12">
    <citation type="journal article" date="2004" name="Neuron">
        <title>Two N-terminal domains of Kv4 K(+) channels regulate binding to and modulation by KChIP1.</title>
        <authorList>
            <person name="Scannevin R.H."/>
            <person name="Wang K."/>
            <person name="Jow F."/>
            <person name="Megules J."/>
            <person name="Kopsco D.C."/>
            <person name="Edris W."/>
            <person name="Carroll K.C."/>
            <person name="Lu Q."/>
            <person name="Xu W."/>
            <person name="Xu Z."/>
            <person name="Katz A.H."/>
            <person name="Olland S."/>
            <person name="Lin L."/>
            <person name="Taylor M."/>
            <person name="Stahl M."/>
            <person name="Malakian K."/>
            <person name="Somers W."/>
            <person name="Mosyak L."/>
            <person name="Bowlby M.R."/>
            <person name="Chanda P."/>
            <person name="Rhodes K.J."/>
        </authorList>
    </citation>
    <scope>X-RAY CRYSTALLOGRAPHY (2.6 ANGSTROMS) OF 29-143 IN COMPLEX WITH ZINC</scope>
    <scope>INTERACTION WITH KCNIP1</scope>
    <scope>DOMAIN</scope>
</reference>
<reference evidence="29" key="13">
    <citation type="journal article" date="2007" name="Nat. Neurosci.">
        <title>Structural basis for modulation of Kv4 K+ channels by auxiliary KChIP subunits.</title>
        <authorList>
            <person name="Wang H."/>
            <person name="Yan Y."/>
            <person name="Liu Q."/>
            <person name="Huang Y."/>
            <person name="Shen Y."/>
            <person name="Chen L."/>
            <person name="Chen Y."/>
            <person name="Yang Q."/>
            <person name="Hao Q."/>
            <person name="Wang K."/>
            <person name="Chai J."/>
        </authorList>
    </citation>
    <scope>X-RAY CRYSTALLOGRAPHY (3.2 ANGSTROMS) OF 6-145 IN COMPLEX WITH KCNIP1</scope>
    <scope>FUNCTION</scope>
    <scope>TRANSPORTER ACTIVITY</scope>
    <scope>SUBUNIT</scope>
    <scope>REGION</scope>
</reference>
<reference evidence="30 31 32 33" key="14">
    <citation type="journal article" date="2022" name="Cell Res.">
        <title>Structural basis for the gating modulation of Kv4.3 by auxiliary subunits.</title>
        <authorList>
            <person name="Ma D."/>
            <person name="Zhao C."/>
            <person name="Wang X."/>
            <person name="Li X."/>
            <person name="Zha Y."/>
            <person name="Zhang Y."/>
            <person name="Fu G."/>
            <person name="Liang P."/>
            <person name="Guo J."/>
            <person name="Lai D."/>
        </authorList>
    </citation>
    <scope>STRUCTURE BY ELECTRON MICROSCOPY (2.80 ANGSTROMS) IN COMPLEX WITH KCNIP1; KCNIP2 AND DPP6</scope>
    <scope>FUNCTION</scope>
    <scope>TRANSPORTER ACTIVITY</scope>
    <scope>SUBUNIT</scope>
    <scope>DOMAIN</scope>
    <scope>REGION</scope>
    <scope>TOPOLOGY</scope>
</reference>
<reference key="15">
    <citation type="journal article" date="2006" name="Science">
        <title>The consensus coding sequences of human breast and colorectal cancers.</title>
        <authorList>
            <person name="Sjoeblom T."/>
            <person name="Jones S."/>
            <person name="Wood L.D."/>
            <person name="Parsons D.W."/>
            <person name="Lin J."/>
            <person name="Barber T.D."/>
            <person name="Mandelker D."/>
            <person name="Leary R.J."/>
            <person name="Ptak J."/>
            <person name="Silliman N."/>
            <person name="Szabo S."/>
            <person name="Buckhaults P."/>
            <person name="Farrell C."/>
            <person name="Meeh P."/>
            <person name="Markowitz S.D."/>
            <person name="Willis J."/>
            <person name="Dawson D."/>
            <person name="Willson J.K.V."/>
            <person name="Gazdar A.F."/>
            <person name="Hartigan J."/>
            <person name="Wu L."/>
            <person name="Liu C."/>
            <person name="Parmigiani G."/>
            <person name="Park B.H."/>
            <person name="Bachman K.E."/>
            <person name="Papadopoulos N."/>
            <person name="Vogelstein B."/>
            <person name="Kinzler K.W."/>
            <person name="Velculescu V.E."/>
        </authorList>
    </citation>
    <scope>VARIANT [LARGE SCALE ANALYSIS] MET-94</scope>
</reference>
<reference key="16">
    <citation type="journal article" date="2012" name="Ann. Neurol.">
        <title>Mutations in KCND3 cause spinocerebellar ataxia type 22.</title>
        <authorList>
            <person name="Lee Y.C."/>
            <person name="Durr A."/>
            <person name="Majczenko K."/>
            <person name="Huang Y.H."/>
            <person name="Liu Y.C."/>
            <person name="Lien C.C."/>
            <person name="Tsai P.C."/>
            <person name="Ichikawa Y."/>
            <person name="Goto J."/>
            <person name="Monin M.L."/>
            <person name="Li J.Z."/>
            <person name="Chung M.Y."/>
            <person name="Mundwiller E."/>
            <person name="Shakkottai V."/>
            <person name="Liu T.T."/>
            <person name="Tesson C."/>
            <person name="Lu Y.C."/>
            <person name="Brice A."/>
            <person name="Tsuji S."/>
            <person name="Burmeister M."/>
            <person name="Stevanin G."/>
            <person name="Soong B.W."/>
        </authorList>
    </citation>
    <scope>VARIANTS SCA19 PHE-227 DEL; GLU-338; VAL-345 AND MET-377</scope>
    <scope>CHARACTERIZATION OF VARIANT PHE-227 DEL</scope>
    <scope>FUNCTION</scope>
    <scope>TRANSPORTER ACTIVITY</scope>
    <scope>SUBCELLULAR LOCATION</scope>
</reference>
<reference key="17">
    <citation type="journal article" date="2012" name="Ann. Neurol.">
        <title>Mutations in potassium channel kcnd3 cause spinocerebellar ataxia type 19.</title>
        <authorList>
            <person name="Duarri A."/>
            <person name="Jezierska J."/>
            <person name="Fokkens M."/>
            <person name="Meijer M."/>
            <person name="Schelhaas H.J."/>
            <person name="den Dunnen W.F."/>
            <person name="van Dijk F."/>
            <person name="Verschuuren-Bemelmans C."/>
            <person name="Hageman G."/>
            <person name="van de Vlies P."/>
            <person name="Kusters B."/>
            <person name="van de Warrenburg B.P."/>
            <person name="Kremer B."/>
            <person name="Wijmenga C."/>
            <person name="Sinke R.J."/>
            <person name="Swertz M.A."/>
            <person name="Kampinga H.H."/>
            <person name="Boddeke E."/>
            <person name="Verbeek D.S."/>
        </authorList>
    </citation>
    <scope>VARIANTS SCA19 PRO-352; ILE-373 AND ASN-390</scope>
    <scope>CHARACTERIZATION OF VARIANTS SCA19 PRO-352; ILE-373 AND ASN-390</scope>
    <scope>FUNCTION</scope>
    <scope>TRANSPORTER ACTIVITY</scope>
    <scope>SUBCELLULAR LOCATION</scope>
</reference>
<reference key="18">
    <citation type="journal article" date="2018" name="Cerebellum">
        <title>Novel de novo KCND3 mutation in a Japanese patient with intellectual disability, cerebellar ataxia, myoclonus, and dystonia.</title>
        <authorList>
            <person name="Kurihara M."/>
            <person name="Ishiura H."/>
            <person name="Sasaki T."/>
            <person name="Otsuka J."/>
            <person name="Hayashi T."/>
            <person name="Terao Y."/>
            <person name="Matsukawa T."/>
            <person name="Mitsui J."/>
            <person name="Kaneko J."/>
            <person name="Nishiyama K."/>
            <person name="Doi K."/>
            <person name="Yoshimura J."/>
            <person name="Morishita S."/>
            <person name="Shimizu J."/>
            <person name="Tsuji S."/>
        </authorList>
    </citation>
    <scope>VARIANT SCA19 SER-384</scope>
</reference>
<dbReference type="EMBL" id="AF048712">
    <property type="protein sequence ID" value="AAC05121.1"/>
    <property type="molecule type" value="mRNA"/>
</dbReference>
<dbReference type="EMBL" id="AF048713">
    <property type="protein sequence ID" value="AAC05122.1"/>
    <property type="molecule type" value="mRNA"/>
</dbReference>
<dbReference type="EMBL" id="AF187963">
    <property type="protein sequence ID" value="AAF01044.1"/>
    <property type="molecule type" value="mRNA"/>
</dbReference>
<dbReference type="EMBL" id="AF187964">
    <property type="protein sequence ID" value="AAF01045.1"/>
    <property type="molecule type" value="mRNA"/>
</dbReference>
<dbReference type="EMBL" id="AF205856">
    <property type="protein sequence ID" value="AAF20924.1"/>
    <property type="molecule type" value="mRNA"/>
</dbReference>
<dbReference type="EMBL" id="AF205857">
    <property type="protein sequence ID" value="AAF20925.1"/>
    <property type="molecule type" value="mRNA"/>
</dbReference>
<dbReference type="EMBL" id="AF120491">
    <property type="protein sequence ID" value="AAD38898.1"/>
    <property type="molecule type" value="mRNA"/>
</dbReference>
<dbReference type="EMBL" id="AF166011">
    <property type="protein sequence ID" value="AAF68177.1"/>
    <property type="molecule type" value="Genomic_DNA"/>
</dbReference>
<dbReference type="EMBL" id="AF166009">
    <property type="protein sequence ID" value="AAF68177.1"/>
    <property type="status" value="JOINED"/>
    <property type="molecule type" value="Genomic_DNA"/>
</dbReference>
<dbReference type="EMBL" id="AF166010">
    <property type="protein sequence ID" value="AAF68177.1"/>
    <property type="status" value="JOINED"/>
    <property type="molecule type" value="Genomic_DNA"/>
</dbReference>
<dbReference type="EMBL" id="AF166011">
    <property type="protein sequence ID" value="AAF68178.1"/>
    <property type="molecule type" value="Genomic_DNA"/>
</dbReference>
<dbReference type="EMBL" id="AF166009">
    <property type="protein sequence ID" value="AAF68178.1"/>
    <property type="status" value="JOINED"/>
    <property type="molecule type" value="Genomic_DNA"/>
</dbReference>
<dbReference type="EMBL" id="AF166010">
    <property type="protein sequence ID" value="AAF68178.1"/>
    <property type="status" value="JOINED"/>
    <property type="molecule type" value="Genomic_DNA"/>
</dbReference>
<dbReference type="EMBL" id="AL512665">
    <property type="status" value="NOT_ANNOTATED_CDS"/>
    <property type="molecule type" value="Genomic_DNA"/>
</dbReference>
<dbReference type="EMBL" id="AL450997">
    <property type="status" value="NOT_ANNOTATED_CDS"/>
    <property type="molecule type" value="Genomic_DNA"/>
</dbReference>
<dbReference type="EMBL" id="AL049557">
    <property type="status" value="NOT_ANNOTATED_CDS"/>
    <property type="molecule type" value="Genomic_DNA"/>
</dbReference>
<dbReference type="EMBL" id="CH471122">
    <property type="protein sequence ID" value="EAW56511.1"/>
    <property type="molecule type" value="Genomic_DNA"/>
</dbReference>
<dbReference type="EMBL" id="BC113475">
    <property type="protein sequence ID" value="AAI13476.1"/>
    <property type="molecule type" value="mRNA"/>
</dbReference>
<dbReference type="EMBL" id="BC113477">
    <property type="protein sequence ID" value="AAI13478.1"/>
    <property type="molecule type" value="mRNA"/>
</dbReference>
<dbReference type="CCDS" id="CCDS843.1">
    <molecule id="Q9UK17-1"/>
</dbReference>
<dbReference type="CCDS" id="CCDS844.1">
    <molecule id="Q9UK17-2"/>
</dbReference>
<dbReference type="RefSeq" id="NP_001365898.1">
    <molecule id="Q9UK17-1"/>
    <property type="nucleotide sequence ID" value="NM_001378969.1"/>
</dbReference>
<dbReference type="RefSeq" id="NP_001365899.1">
    <molecule id="Q9UK17-2"/>
    <property type="nucleotide sequence ID" value="NM_001378970.1"/>
</dbReference>
<dbReference type="RefSeq" id="NP_004971.2">
    <molecule id="Q9UK17-1"/>
    <property type="nucleotide sequence ID" value="NM_004980.4"/>
</dbReference>
<dbReference type="RefSeq" id="NP_751948.1">
    <molecule id="Q9UK17-2"/>
    <property type="nucleotide sequence ID" value="NM_172198.3"/>
</dbReference>
<dbReference type="RefSeq" id="XP_005270908.1">
    <property type="nucleotide sequence ID" value="XM_005270851.4"/>
</dbReference>
<dbReference type="RefSeq" id="XP_006710692.1">
    <molecule id="Q9UK17-1"/>
    <property type="nucleotide sequence ID" value="XM_006710629.5"/>
</dbReference>
<dbReference type="RefSeq" id="XP_006710693.1">
    <property type="nucleotide sequence ID" value="XM_006710630.3"/>
</dbReference>
<dbReference type="RefSeq" id="XP_016856733.1">
    <molecule id="Q9UK17-1"/>
    <property type="nucleotide sequence ID" value="XM_017001244.3"/>
</dbReference>
<dbReference type="RefSeq" id="XP_054192436.1">
    <molecule id="Q9UK17-1"/>
    <property type="nucleotide sequence ID" value="XM_054336461.1"/>
</dbReference>
<dbReference type="RefSeq" id="XP_054192437.1">
    <molecule id="Q9UK17-1"/>
    <property type="nucleotide sequence ID" value="XM_054336462.1"/>
</dbReference>
<dbReference type="PDB" id="1S1G">
    <property type="method" value="X-ray"/>
    <property type="resolution" value="2.60 A"/>
    <property type="chains" value="A/B=29-143"/>
</dbReference>
<dbReference type="PDB" id="2NZ0">
    <property type="method" value="X-ray"/>
    <property type="resolution" value="3.20 A"/>
    <property type="chains" value="B/D=6-145"/>
</dbReference>
<dbReference type="PDB" id="7W3Y">
    <property type="method" value="EM"/>
    <property type="resolution" value="3.00 A"/>
    <property type="chains" value="A/B/C/D=1-655"/>
</dbReference>
<dbReference type="PDB" id="7W6N">
    <property type="method" value="EM"/>
    <property type="resolution" value="3.40 A"/>
    <property type="chains" value="B/D/F/H=1-655"/>
</dbReference>
<dbReference type="PDB" id="7W6S">
    <property type="method" value="EM"/>
    <property type="resolution" value="2.80 A"/>
    <property type="chains" value="B/D/F/H=1-655"/>
</dbReference>
<dbReference type="PDB" id="7W6T">
    <property type="method" value="EM"/>
    <property type="resolution" value="3.85 A"/>
    <property type="chains" value="B/D/F/H=1-655"/>
</dbReference>
<dbReference type="PDBsum" id="1S1G"/>
<dbReference type="PDBsum" id="2NZ0"/>
<dbReference type="PDBsum" id="7W3Y"/>
<dbReference type="PDBsum" id="7W6N"/>
<dbReference type="PDBsum" id="7W6S"/>
<dbReference type="PDBsum" id="7W6T"/>
<dbReference type="EMDB" id="EMD-32296"/>
<dbReference type="EMDB" id="EMD-32330"/>
<dbReference type="EMDB" id="EMD-32334"/>
<dbReference type="EMDB" id="EMD-32335"/>
<dbReference type="SMR" id="Q9UK17"/>
<dbReference type="BioGRID" id="109954">
    <property type="interactions" value="46"/>
</dbReference>
<dbReference type="ComplexPortal" id="CPX-3256">
    <property type="entry name" value="Kv4.3-KChIP1 channel complex"/>
</dbReference>
<dbReference type="CORUM" id="Q9UK17"/>
<dbReference type="FunCoup" id="Q9UK17">
    <property type="interactions" value="97"/>
</dbReference>
<dbReference type="IntAct" id="Q9UK17">
    <property type="interactions" value="2"/>
</dbReference>
<dbReference type="STRING" id="9606.ENSP00000319591"/>
<dbReference type="BindingDB" id="Q9UK17"/>
<dbReference type="ChEMBL" id="CHEMBL1964"/>
<dbReference type="DrugBank" id="DB06637">
    <property type="generic name" value="Dalfampridine"/>
</dbReference>
<dbReference type="DrugBank" id="DB00280">
    <property type="generic name" value="Disopyramide"/>
</dbReference>
<dbReference type="DrugBank" id="DB04855">
    <property type="generic name" value="Dronedarone"/>
</dbReference>
<dbReference type="DrugBank" id="DB00228">
    <property type="generic name" value="Enflurane"/>
</dbReference>
<dbReference type="DrugBank" id="DB00458">
    <property type="generic name" value="Imipramine"/>
</dbReference>
<dbReference type="DrugBank" id="DB11633">
    <property type="generic name" value="Isavuconazole"/>
</dbReference>
<dbReference type="DrugBank" id="DB01110">
    <property type="generic name" value="Miconazole"/>
</dbReference>
<dbReference type="DrugBank" id="DB01115">
    <property type="generic name" value="Nifedipine"/>
</dbReference>
<dbReference type="DrugBank" id="DB01069">
    <property type="generic name" value="Promethazine"/>
</dbReference>
<dbReference type="DrugBank" id="DB01390">
    <property type="generic name" value="Sodium bicarbonate"/>
</dbReference>
<dbReference type="DrugBank" id="DB06217">
    <property type="generic name" value="Vernakalant"/>
</dbReference>
<dbReference type="DrugCentral" id="Q9UK17"/>
<dbReference type="TCDB" id="1.A.1.2.19">
    <property type="family name" value="the voltage-gated ion channel (vic) superfamily"/>
</dbReference>
<dbReference type="iPTMnet" id="Q9UK17"/>
<dbReference type="PhosphoSitePlus" id="Q9UK17"/>
<dbReference type="SwissPalm" id="Q9UK17"/>
<dbReference type="BioMuta" id="KCND3"/>
<dbReference type="DMDM" id="92090984"/>
<dbReference type="jPOST" id="Q9UK17"/>
<dbReference type="MassIVE" id="Q9UK17"/>
<dbReference type="PaxDb" id="9606-ENSP00000319591"/>
<dbReference type="PeptideAtlas" id="Q9UK17"/>
<dbReference type="ProteomicsDB" id="84705">
    <molecule id="Q9UK17-1"/>
</dbReference>
<dbReference type="ProteomicsDB" id="84706">
    <molecule id="Q9UK17-2"/>
</dbReference>
<dbReference type="ABCD" id="Q9UK17">
    <property type="antibodies" value="2 sequenced antibodies"/>
</dbReference>
<dbReference type="Antibodypedia" id="20128">
    <property type="antibodies" value="211 antibodies from 30 providers"/>
</dbReference>
<dbReference type="DNASU" id="3752"/>
<dbReference type="Ensembl" id="ENST00000302127.5">
    <molecule id="Q9UK17-1"/>
    <property type="protein sequence ID" value="ENSP00000306923.4"/>
    <property type="gene ID" value="ENSG00000171385.11"/>
</dbReference>
<dbReference type="Ensembl" id="ENST00000315987.6">
    <molecule id="Q9UK17-1"/>
    <property type="protein sequence ID" value="ENSP00000319591.2"/>
    <property type="gene ID" value="ENSG00000171385.11"/>
</dbReference>
<dbReference type="Ensembl" id="ENST00000369697.5">
    <molecule id="Q9UK17-2"/>
    <property type="protein sequence ID" value="ENSP00000358711.1"/>
    <property type="gene ID" value="ENSG00000171385.11"/>
</dbReference>
<dbReference type="GeneID" id="3752"/>
<dbReference type="KEGG" id="hsa:3752"/>
<dbReference type="MANE-Select" id="ENST00000302127.5">
    <property type="protein sequence ID" value="ENSP00000306923.4"/>
    <property type="RefSeq nucleotide sequence ID" value="NM_001378969.1"/>
    <property type="RefSeq protein sequence ID" value="NP_001365898.1"/>
</dbReference>
<dbReference type="UCSC" id="uc001ebu.2">
    <molecule id="Q9UK17-1"/>
    <property type="organism name" value="human"/>
</dbReference>
<dbReference type="AGR" id="HGNC:6239"/>
<dbReference type="CTD" id="3752"/>
<dbReference type="DisGeNET" id="3752"/>
<dbReference type="GeneCards" id="KCND3"/>
<dbReference type="GeneReviews" id="KCND3"/>
<dbReference type="HGNC" id="HGNC:6239">
    <property type="gene designation" value="KCND3"/>
</dbReference>
<dbReference type="HPA" id="ENSG00000171385">
    <property type="expression patterns" value="Tissue enhanced (brain)"/>
</dbReference>
<dbReference type="MalaCards" id="KCND3"/>
<dbReference type="MIM" id="605411">
    <property type="type" value="gene"/>
</dbReference>
<dbReference type="MIM" id="607346">
    <property type="type" value="phenotype"/>
</dbReference>
<dbReference type="MIM" id="616399">
    <property type="type" value="phenotype"/>
</dbReference>
<dbReference type="neXtProt" id="NX_Q9UK17"/>
<dbReference type="OpenTargets" id="ENSG00000171385"/>
<dbReference type="Orphanet" id="130">
    <property type="disease" value="Brugada syndrome"/>
</dbReference>
<dbReference type="Orphanet" id="98772">
    <property type="disease" value="Spinocerebellar ataxia type 19/22"/>
</dbReference>
<dbReference type="PharmGKB" id="PA210"/>
<dbReference type="VEuPathDB" id="HostDB:ENSG00000171385"/>
<dbReference type="eggNOG" id="KOG4390">
    <property type="taxonomic scope" value="Eukaryota"/>
</dbReference>
<dbReference type="GeneTree" id="ENSGT00940000155343"/>
<dbReference type="HOGENOM" id="CLU_011722_9_1_1"/>
<dbReference type="InParanoid" id="Q9UK17"/>
<dbReference type="OMA" id="SQRYQNY"/>
<dbReference type="OrthoDB" id="433309at2759"/>
<dbReference type="PAN-GO" id="Q9UK17">
    <property type="GO annotations" value="8 GO annotations based on evolutionary models"/>
</dbReference>
<dbReference type="PhylomeDB" id="Q9UK17"/>
<dbReference type="TreeFam" id="TF313103"/>
<dbReference type="PathwayCommons" id="Q9UK17"/>
<dbReference type="Reactome" id="R-HSA-1296072">
    <property type="pathway name" value="Voltage gated Potassium channels"/>
</dbReference>
<dbReference type="Reactome" id="R-HSA-5576894">
    <property type="pathway name" value="Phase 1 - inactivation of fast Na+ channels"/>
</dbReference>
<dbReference type="SignaLink" id="Q9UK17"/>
<dbReference type="SIGNOR" id="Q9UK17"/>
<dbReference type="BioGRID-ORCS" id="3752">
    <property type="hits" value="23 hits in 1159 CRISPR screens"/>
</dbReference>
<dbReference type="ChiTaRS" id="KCND3">
    <property type="organism name" value="human"/>
</dbReference>
<dbReference type="EvolutionaryTrace" id="Q9UK17"/>
<dbReference type="GeneWiki" id="KCND3"/>
<dbReference type="GenomeRNAi" id="3752"/>
<dbReference type="Pharos" id="Q9UK17">
    <property type="development level" value="Tclin"/>
</dbReference>
<dbReference type="PRO" id="PR:Q9UK17"/>
<dbReference type="Proteomes" id="UP000005640">
    <property type="component" value="Chromosome 1"/>
</dbReference>
<dbReference type="RNAct" id="Q9UK17">
    <property type="molecule type" value="protein"/>
</dbReference>
<dbReference type="Bgee" id="ENSG00000171385">
    <property type="expression patterns" value="Expressed in cerebellar vermis and 185 other cell types or tissues"/>
</dbReference>
<dbReference type="ExpressionAtlas" id="Q9UK17">
    <property type="expression patterns" value="baseline and differential"/>
</dbReference>
<dbReference type="GO" id="GO:0043197">
    <property type="term" value="C:dendritic spine"/>
    <property type="evidence" value="ECO:0000318"/>
    <property type="project" value="GO_Central"/>
</dbReference>
<dbReference type="GO" id="GO:0098982">
    <property type="term" value="C:GABA-ergic synapse"/>
    <property type="evidence" value="ECO:0007669"/>
    <property type="project" value="Ensembl"/>
</dbReference>
<dbReference type="GO" id="GO:0071196">
    <property type="term" value="C:Kv4.3-KChIP1 channel complex"/>
    <property type="evidence" value="ECO:0000353"/>
    <property type="project" value="ComplexPortal"/>
</dbReference>
<dbReference type="GO" id="GO:0043025">
    <property type="term" value="C:neuronal cell body"/>
    <property type="evidence" value="ECO:0000318"/>
    <property type="project" value="GO_Central"/>
</dbReference>
<dbReference type="GO" id="GO:0005886">
    <property type="term" value="C:plasma membrane"/>
    <property type="evidence" value="ECO:0000314"/>
    <property type="project" value="UniProtKB"/>
</dbReference>
<dbReference type="GO" id="GO:0045211">
    <property type="term" value="C:postsynaptic membrane"/>
    <property type="evidence" value="ECO:0000318"/>
    <property type="project" value="GO_Central"/>
</dbReference>
<dbReference type="GO" id="GO:0099634">
    <property type="term" value="C:postsynaptic specialization membrane"/>
    <property type="evidence" value="ECO:0007669"/>
    <property type="project" value="Ensembl"/>
</dbReference>
<dbReference type="GO" id="GO:0042383">
    <property type="term" value="C:sarcolemma"/>
    <property type="evidence" value="ECO:0007669"/>
    <property type="project" value="UniProtKB-SubCell"/>
</dbReference>
<dbReference type="GO" id="GO:0008076">
    <property type="term" value="C:voltage-gated potassium channel complex"/>
    <property type="evidence" value="ECO:0000314"/>
    <property type="project" value="BHF-UCL"/>
</dbReference>
<dbReference type="GO" id="GO:0005250">
    <property type="term" value="F:A-type (transient outward) potassium channel activity"/>
    <property type="evidence" value="ECO:0000314"/>
    <property type="project" value="UniProtKB"/>
</dbReference>
<dbReference type="GO" id="GO:0046872">
    <property type="term" value="F:metal ion binding"/>
    <property type="evidence" value="ECO:0007669"/>
    <property type="project" value="UniProtKB-KW"/>
</dbReference>
<dbReference type="GO" id="GO:0086008">
    <property type="term" value="F:voltage-gated potassium channel activity involved in cardiac muscle cell action potential repolarization"/>
    <property type="evidence" value="ECO:0000304"/>
    <property type="project" value="BHF-UCL"/>
</dbReference>
<dbReference type="GO" id="GO:0001508">
    <property type="term" value="P:action potential"/>
    <property type="evidence" value="ECO:0000318"/>
    <property type="project" value="GO_Central"/>
</dbReference>
<dbReference type="GO" id="GO:0007268">
    <property type="term" value="P:chemical synaptic transmission"/>
    <property type="evidence" value="ECO:0000303"/>
    <property type="project" value="ComplexPortal"/>
</dbReference>
<dbReference type="GO" id="GO:0086009">
    <property type="term" value="P:membrane repolarization"/>
    <property type="evidence" value="ECO:0000314"/>
    <property type="project" value="BHF-UCL"/>
</dbReference>
<dbReference type="GO" id="GO:0086013">
    <property type="term" value="P:membrane repolarization during cardiac muscle cell action potential"/>
    <property type="evidence" value="ECO:0000304"/>
    <property type="project" value="BHF-UCL"/>
</dbReference>
<dbReference type="GO" id="GO:0098915">
    <property type="term" value="P:membrane repolarization during ventricular cardiac muscle cell action potential"/>
    <property type="evidence" value="ECO:0007669"/>
    <property type="project" value="GOC"/>
</dbReference>
<dbReference type="GO" id="GO:0006936">
    <property type="term" value="P:muscle contraction"/>
    <property type="evidence" value="ECO:0000303"/>
    <property type="project" value="ComplexPortal"/>
</dbReference>
<dbReference type="GO" id="GO:0097623">
    <property type="term" value="P:potassium ion export across plasma membrane"/>
    <property type="evidence" value="ECO:0000314"/>
    <property type="project" value="BHF-UCL"/>
</dbReference>
<dbReference type="GO" id="GO:0071805">
    <property type="term" value="P:potassium ion transmembrane transport"/>
    <property type="evidence" value="ECO:0000314"/>
    <property type="project" value="UniProtKB"/>
</dbReference>
<dbReference type="GO" id="GO:0006813">
    <property type="term" value="P:potassium ion transport"/>
    <property type="evidence" value="ECO:0000314"/>
    <property type="project" value="UniProtKB"/>
</dbReference>
<dbReference type="GO" id="GO:0051260">
    <property type="term" value="P:protein homooligomerization"/>
    <property type="evidence" value="ECO:0007669"/>
    <property type="project" value="InterPro"/>
</dbReference>
<dbReference type="GO" id="GO:0051262">
    <property type="term" value="P:protein tetramerization"/>
    <property type="evidence" value="ECO:0000314"/>
    <property type="project" value="UniProtKB"/>
</dbReference>
<dbReference type="GO" id="GO:0008016">
    <property type="term" value="P:regulation of heart contraction"/>
    <property type="evidence" value="ECO:0000303"/>
    <property type="project" value="ComplexPortal"/>
</dbReference>
<dbReference type="GO" id="GO:0086091">
    <property type="term" value="P:regulation of heart rate by cardiac conduction"/>
    <property type="evidence" value="ECO:0000315"/>
    <property type="project" value="BHF-UCL"/>
</dbReference>
<dbReference type="GO" id="GO:0099625">
    <property type="term" value="P:ventricular cardiac muscle cell membrane repolarization"/>
    <property type="evidence" value="ECO:0000315"/>
    <property type="project" value="BHF-UCL"/>
</dbReference>
<dbReference type="CDD" id="cd18419">
    <property type="entry name" value="BTB_POZ_KCND3"/>
    <property type="match status" value="1"/>
</dbReference>
<dbReference type="FunFam" id="1.10.287.70:FF:000073">
    <property type="entry name" value="Potassium voltage-gated channel subfamily D member 2"/>
    <property type="match status" value="1"/>
</dbReference>
<dbReference type="FunFam" id="1.10.287.70:FF:000111">
    <property type="entry name" value="Potassium voltage-gated channel subfamily D member 3"/>
    <property type="match status" value="1"/>
</dbReference>
<dbReference type="FunFam" id="1.20.120.350:FF:000016">
    <property type="entry name" value="Potassium voltage-gated channel subfamily D member 3"/>
    <property type="match status" value="1"/>
</dbReference>
<dbReference type="FunFam" id="3.30.710.10:FF:000004">
    <property type="entry name" value="Potassium voltage-gated channel subfamily D member 3"/>
    <property type="match status" value="1"/>
</dbReference>
<dbReference type="Gene3D" id="1.10.287.70">
    <property type="match status" value="1"/>
</dbReference>
<dbReference type="Gene3D" id="3.30.710.10">
    <property type="entry name" value="Potassium Channel Kv1.1, Chain A"/>
    <property type="match status" value="1"/>
</dbReference>
<dbReference type="Gene3D" id="1.20.120.350">
    <property type="entry name" value="Voltage-gated potassium channels. Chain C"/>
    <property type="match status" value="1"/>
</dbReference>
<dbReference type="InterPro" id="IPR000210">
    <property type="entry name" value="BTB/POZ_dom"/>
</dbReference>
<dbReference type="InterPro" id="IPR005821">
    <property type="entry name" value="Ion_trans_dom"/>
</dbReference>
<dbReference type="InterPro" id="IPR003968">
    <property type="entry name" value="K_chnl_volt-dep_Kv"/>
</dbReference>
<dbReference type="InterPro" id="IPR003975">
    <property type="entry name" value="K_chnl_volt-dep_Kv4"/>
</dbReference>
<dbReference type="InterPro" id="IPR004056">
    <property type="entry name" value="K_chnl_volt-dep_Kv4.3"/>
</dbReference>
<dbReference type="InterPro" id="IPR024587">
    <property type="entry name" value="K_chnl_volt-dep_Kv4_C"/>
</dbReference>
<dbReference type="InterPro" id="IPR021645">
    <property type="entry name" value="Shal-type_N"/>
</dbReference>
<dbReference type="InterPro" id="IPR011333">
    <property type="entry name" value="SKP1/BTB/POZ_sf"/>
</dbReference>
<dbReference type="InterPro" id="IPR003131">
    <property type="entry name" value="T1-type_BTB"/>
</dbReference>
<dbReference type="InterPro" id="IPR028325">
    <property type="entry name" value="VG_K_chnl"/>
</dbReference>
<dbReference type="InterPro" id="IPR027359">
    <property type="entry name" value="Volt_channel_dom_sf"/>
</dbReference>
<dbReference type="PANTHER" id="PTHR11537:SF182">
    <property type="entry name" value="POTASSIUM VOLTAGE-GATED CHANNEL SUBFAMILY D MEMBER 3"/>
    <property type="match status" value="1"/>
</dbReference>
<dbReference type="PANTHER" id="PTHR11537">
    <property type="entry name" value="VOLTAGE-GATED POTASSIUM CHANNEL"/>
    <property type="match status" value="1"/>
</dbReference>
<dbReference type="Pfam" id="PF02214">
    <property type="entry name" value="BTB_2"/>
    <property type="match status" value="1"/>
</dbReference>
<dbReference type="Pfam" id="PF11879">
    <property type="entry name" value="DUF3399"/>
    <property type="match status" value="1"/>
</dbReference>
<dbReference type="Pfam" id="PF00520">
    <property type="entry name" value="Ion_trans"/>
    <property type="match status" value="1"/>
</dbReference>
<dbReference type="Pfam" id="PF11601">
    <property type="entry name" value="Shal-type"/>
    <property type="match status" value="1"/>
</dbReference>
<dbReference type="PRINTS" id="PR00169">
    <property type="entry name" value="KCHANNEL"/>
</dbReference>
<dbReference type="PRINTS" id="PR01518">
    <property type="entry name" value="KV43CHANNEL"/>
</dbReference>
<dbReference type="PRINTS" id="PR01491">
    <property type="entry name" value="KVCHANNEL"/>
</dbReference>
<dbReference type="PRINTS" id="PR01497">
    <property type="entry name" value="SHALCHANNEL"/>
</dbReference>
<dbReference type="SMART" id="SM00225">
    <property type="entry name" value="BTB"/>
    <property type="match status" value="1"/>
</dbReference>
<dbReference type="SUPFAM" id="SSF54695">
    <property type="entry name" value="POZ domain"/>
    <property type="match status" value="1"/>
</dbReference>
<dbReference type="SUPFAM" id="SSF81324">
    <property type="entry name" value="Voltage-gated potassium channels"/>
    <property type="match status" value="1"/>
</dbReference>
<gene>
    <name type="primary">KCND3</name>
</gene>
<accession>Q9UK17</accession>
<accession>O60576</accession>
<accession>O60577</accession>
<accession>Q14D71</accession>
<accession>Q5T0M0</accession>
<accession>Q9UH85</accession>
<accession>Q9UH86</accession>
<accession>Q9UK16</accession>
<keyword id="KW-0002">3D-structure</keyword>
<keyword id="KW-0025">Alternative splicing</keyword>
<keyword id="KW-0992">Brugada syndrome</keyword>
<keyword id="KW-1003">Cell membrane</keyword>
<keyword id="KW-0966">Cell projection</keyword>
<keyword id="KW-0225">Disease variant</keyword>
<keyword id="KW-0407">Ion channel</keyword>
<keyword id="KW-0406">Ion transport</keyword>
<keyword id="KW-0472">Membrane</keyword>
<keyword id="KW-0479">Metal-binding</keyword>
<keyword id="KW-0523">Neurodegeneration</keyword>
<keyword id="KW-0597">Phosphoprotein</keyword>
<keyword id="KW-0630">Potassium</keyword>
<keyword id="KW-0631">Potassium channel</keyword>
<keyword id="KW-0633">Potassium transport</keyword>
<keyword id="KW-1267">Proteomics identification</keyword>
<keyword id="KW-1185">Reference proteome</keyword>
<keyword id="KW-0950">Spinocerebellar ataxia</keyword>
<keyword id="KW-0812">Transmembrane</keyword>
<keyword id="KW-1133">Transmembrane helix</keyword>
<keyword id="KW-0813">Transport</keyword>
<keyword id="KW-0851">Voltage-gated channel</keyword>
<keyword id="KW-0862">Zinc</keyword>
<protein>
    <recommendedName>
        <fullName evidence="26">A-type voltage-gated potassium channel KCND3</fullName>
    </recommendedName>
    <alternativeName>
        <fullName>Potassium voltage-gated channel subfamily D member 3</fullName>
    </alternativeName>
    <alternativeName>
        <fullName>Voltage-gated potassium channel subunit Kv4.3</fullName>
    </alternativeName>
</protein>
<evidence type="ECO:0000250" key="1">
    <source>
        <dbReference type="UniProtKB" id="P63142"/>
    </source>
</evidence>
<evidence type="ECO:0000250" key="2">
    <source>
        <dbReference type="UniProtKB" id="Q62897"/>
    </source>
</evidence>
<evidence type="ECO:0000250" key="3">
    <source>
        <dbReference type="UniProtKB" id="Q63881"/>
    </source>
</evidence>
<evidence type="ECO:0000250" key="4">
    <source>
        <dbReference type="UniProtKB" id="Q9NZV8"/>
    </source>
</evidence>
<evidence type="ECO:0000250" key="5">
    <source>
        <dbReference type="UniProtKB" id="Q9Z0V1"/>
    </source>
</evidence>
<evidence type="ECO:0000255" key="6"/>
<evidence type="ECO:0000256" key="7">
    <source>
        <dbReference type="SAM" id="MobiDB-lite"/>
    </source>
</evidence>
<evidence type="ECO:0000269" key="8">
    <source>
    </source>
</evidence>
<evidence type="ECO:0000269" key="9">
    <source>
    </source>
</evidence>
<evidence type="ECO:0000269" key="10">
    <source>
    </source>
</evidence>
<evidence type="ECO:0000269" key="11">
    <source>
    </source>
</evidence>
<evidence type="ECO:0000269" key="12">
    <source>
    </source>
</evidence>
<evidence type="ECO:0000269" key="13">
    <source>
    </source>
</evidence>
<evidence type="ECO:0000269" key="14">
    <source>
    </source>
</evidence>
<evidence type="ECO:0000269" key="15">
    <source>
    </source>
</evidence>
<evidence type="ECO:0000269" key="16">
    <source>
    </source>
</evidence>
<evidence type="ECO:0000269" key="17">
    <source>
    </source>
</evidence>
<evidence type="ECO:0000269" key="18">
    <source>
    </source>
</evidence>
<evidence type="ECO:0000269" key="19">
    <source>
    </source>
</evidence>
<evidence type="ECO:0000269" key="20">
    <source>
    </source>
</evidence>
<evidence type="ECO:0000269" key="21">
    <source>
    </source>
</evidence>
<evidence type="ECO:0000303" key="22">
    <source>
    </source>
</evidence>
<evidence type="ECO:0000303" key="23">
    <source>
    </source>
</evidence>
<evidence type="ECO:0000303" key="24">
    <source>
    </source>
</evidence>
<evidence type="ECO:0000303" key="25">
    <source>
    </source>
</evidence>
<evidence type="ECO:0000305" key="26"/>
<evidence type="ECO:0000305" key="27">
    <source>
    </source>
</evidence>
<evidence type="ECO:0007744" key="28">
    <source>
        <dbReference type="PDB" id="1S1G"/>
    </source>
</evidence>
<evidence type="ECO:0007744" key="29">
    <source>
        <dbReference type="PDB" id="2NZ0"/>
    </source>
</evidence>
<evidence type="ECO:0007744" key="30">
    <source>
        <dbReference type="PDB" id="7W3Y"/>
    </source>
</evidence>
<evidence type="ECO:0007744" key="31">
    <source>
        <dbReference type="PDB" id="7W6N"/>
    </source>
</evidence>
<evidence type="ECO:0007744" key="32">
    <source>
        <dbReference type="PDB" id="7W6S"/>
    </source>
</evidence>
<evidence type="ECO:0007744" key="33">
    <source>
        <dbReference type="PDB" id="7W6T"/>
    </source>
</evidence>
<evidence type="ECO:0007829" key="34">
    <source>
        <dbReference type="PDB" id="1S1G"/>
    </source>
</evidence>
<evidence type="ECO:0007829" key="35">
    <source>
        <dbReference type="PDB" id="2NZ0"/>
    </source>
</evidence>
<evidence type="ECO:0007829" key="36">
    <source>
        <dbReference type="PDB" id="7W3Y"/>
    </source>
</evidence>
<evidence type="ECO:0007829" key="37">
    <source>
        <dbReference type="PDB" id="7W6N"/>
    </source>
</evidence>
<evidence type="ECO:0007829" key="38">
    <source>
        <dbReference type="PDB" id="7W6S"/>
    </source>
</evidence>
<name>KCND3_HUMAN</name>
<proteinExistence type="evidence at protein level"/>
<organism>
    <name type="scientific">Homo sapiens</name>
    <name type="common">Human</name>
    <dbReference type="NCBI Taxonomy" id="9606"/>
    <lineage>
        <taxon>Eukaryota</taxon>
        <taxon>Metazoa</taxon>
        <taxon>Chordata</taxon>
        <taxon>Craniata</taxon>
        <taxon>Vertebrata</taxon>
        <taxon>Euteleostomi</taxon>
        <taxon>Mammalia</taxon>
        <taxon>Eutheria</taxon>
        <taxon>Euarchontoglires</taxon>
        <taxon>Primates</taxon>
        <taxon>Haplorrhini</taxon>
        <taxon>Catarrhini</taxon>
        <taxon>Hominidae</taxon>
        <taxon>Homo</taxon>
    </lineage>
</organism>
<sequence length="655" mass="73451">MAAGVAAWLPFARAAAIGWMPVANCPMPLAPADKNKRQDELIVLNVSGRRFQTWRTTLERYPDTLLGSTEKEFFFNEDTKEYFFDRDPEVFRCVLNFYRTGKLHYPRYECISAYDDELAFYGILPEIIGDCCYEEYKDRKRENAERLMDDNDSENNQESMPSLSFRQTMWRAFENPHTSTLALVFYYVTGFFIAVSVITNVVETVPCGTVPGSKELPCGERYSVAFFCLDTACVMIFTVEYLLRLFAAPSRYRFIRSVMSIIDVVAIMPYYIGLVMTNNEDVSGAFVTLRVFRVFRIFKFSRHSQGLRILGYTLKSCASELGFLLFSLTMAIIIFATVMFYAEKGSSASKFTSIPASFWYTIVTMTTLGYGDMVPKTIAGKIFGSICSLSGVLVIALPVPVIVSNFSRIYHQNQRADKRRAQKKARLARIRVAKTGSSNAYLHSKRNGLLNEALELTGTPEEEHMGKTTSLIESQHHHLLHCLEKTTGLSYLVDDPLLSVRTSTIKNHEFIDEQMFEQNCMESSMQNYPSTRSPSLSSHPGLTTTCCSRRSKKTTHLPNSNLPATRLRSMQELSTIHIQGSEQPSLTTSRSSLNLKADDGLRPNCKTSQITTAIISIPTPPALTPEGESRPPPASPGPNTNIPSIASNVVKVSAL</sequence>
<comment type="function">
    <text evidence="2 8 13 15 16 17 18 20 21">Pore-forming (alpha) subunit of voltage-gated A-type potassium channels that mediates transmembrane potassium transport in excitable membranes, in brain and heart (PubMed:10200233, PubMed:17187064, PubMed:21349352, PubMed:22457051, PubMed:23280837, PubMed:23280838, PubMed:34997220, PubMed:9843794). In cardiomyocytes, may generate the transient outward potassium current I(To) (By similarity). In neurons, may conduct the transient subthreshold somatodendritic A-type potassium current (ISA) (By similarity). Kinetics properties are characterized by fast activation at subthreshold membrane potentials, rapid inactivation, and quick recovery from inactivation (PubMed:10200233, PubMed:17187064, PubMed:21349352, PubMed:22457051, PubMed:23280837, PubMed:23280838, PubMed:34997220, PubMed:9843794). Channel properties are modulated by interactions with regulatory subunits (PubMed:17187064, PubMed:34997220). Interaction with the regulatory subunits KCNIP1 or KCNIP2 modulates the channel gating kinetics namely channel activation and inactivation kinetics and rate of recovery from inactivation (PubMed:17187064, PubMed:34997220). Likewise, interaction with DPP6 modulates the channel gating kinetics namely channel activation and inactivation kinetics (PubMed:34997220).</text>
</comment>
<comment type="catalytic activity">
    <reaction evidence="8 13 15 16 17 18 20 21">
        <text>K(+)(in) = K(+)(out)</text>
        <dbReference type="Rhea" id="RHEA:29463"/>
        <dbReference type="ChEBI" id="CHEBI:29103"/>
    </reaction>
</comment>
<comment type="subunit">
    <text evidence="2 5 10 11 13 14 20">Homotetramer (PubMed:17187064, PubMed:34997220). Heterotetramer with KCND2 (By similarity). Associates with the regulatory subunits KCNIP3 and KCNIP4 (By similarity). Interacts with KCNE1, KCNE2, SCN1B and KCNAB1 and DLG1 (PubMed:12297301, PubMed:19213956). Component of heteromultimeric potassium channels. Identified in potassium channel complexes containing KCND1, KCND2, KCND3, KCNIP1, KCNIP2, KCNIP3, KCNIP4, DPP6 and DPP10 (By similarity). Interacts with KCNIP1; each KCNIP1 monomer interacts with two adjacent KCND3 subunits, through both the N-terminal inactivation ball of a KCND3 subunit and a C-terminal helix from the adjacent KCND3 subunit, clamping them together; this interaction stabilizes the tetrameric form and modulates the channel gating kinetics namely channel activation and inactivation kinetics and rate of recovery from inactivation (PubMed:14980207, PubMed:17187064, PubMed:34997220). Interacts with DPP6; this interaction modulates the channel gating kinetics namely channel activation and inactivation kinetics and rate of recovery from inactivation (PubMed:34997220). Interacts with KCNIP2; each KCNIP2 monomer interacts with two adjacent KCND3 subunits, through both the N-terminal inactivation ball of a KCND3 subunit and a C-terminal helix from the adjacent KCND3 subunit, clamping them together; this interaction modulates the channel gating kinetics (PubMed:12297301, PubMed:34997220).</text>
</comment>
<comment type="interaction">
    <interactant intactId="EBI-9825212">
        <id>Q9UK17</id>
    </interactant>
    <interactant intactId="EBI-2120635">
        <id>Q9NZI2</id>
        <label>KCNIP1</label>
    </interactant>
    <organismsDiffer>false</organismsDiffer>
    <experiments>3</experiments>
</comment>
<comment type="subcellular location">
    <subcellularLocation>
        <location evidence="17 18">Cell membrane</location>
        <topology evidence="6">Multi-pass membrane protein</topology>
    </subcellularLocation>
    <subcellularLocation>
        <location evidence="2">Cell membrane</location>
        <location evidence="2">Sarcolemma</location>
        <topology evidence="6">Multi-pass membrane protein</topology>
    </subcellularLocation>
    <subcellularLocation>
        <location evidence="2">Cell projection</location>
        <location evidence="2">Dendrite</location>
    </subcellularLocation>
    <text evidence="2">Interaction with palmitoylated KCNIP2 and KCNIP3 enhances cell surface expression.</text>
</comment>
<comment type="alternative products">
    <event type="alternative splicing"/>
    <isoform>
        <id>Q9UK17-1</id>
        <name>1</name>
        <name>KCND3L</name>
        <name>Long</name>
        <sequence type="displayed"/>
    </isoform>
    <isoform>
        <id>Q9UK17-2</id>
        <name>2</name>
        <name>KCND3S</name>
        <name>Short</name>
        <sequence type="described" ref="VSP_008826"/>
    </isoform>
</comment>
<comment type="tissue specificity">
    <text evidence="8 9 21">Highly expressed in heart and brain, in particular in cortex, cerebellum, amygdala and caudate nucleus (PubMed:10200233, PubMed:10729221, PubMed:9843794). Detected at lower levels in liver, skeletal muscle, kidney and pancreas (PubMed:10200233, PubMed:10729221).</text>
</comment>
<comment type="domain">
    <text evidence="11">Two N-terminal domains regulate binding to and modulation by KCNIP1.</text>
</comment>
<comment type="PTM">
    <text evidence="2">Regulated through phosphorylation at Ser-569 by CaMK2D.</text>
</comment>
<comment type="disease" evidence="17 18 19">
    <disease id="DI-03932">
        <name>Spinocerebellar ataxia 19</name>
        <acronym>SCA19</acronym>
        <description>A form of spinocerebellar ataxia, a clinically and genetically heterogeneous group of cerebellar disorders. Patients show progressive incoordination of gait and often poor coordination of hands, speech and eye movements, due to degeneration of the cerebellum with variable involvement of the brainstem and spinal cord. SCA19 is a relatively mild, cerebellar ataxic syndrome with cognitive impairment, pyramidal tract involvement, tremor and peripheral neuropathy, and mild atrophy of the cerebellar hemispheres and vermis.</description>
        <dbReference type="MIM" id="607346"/>
    </disease>
    <text>The disease is caused by variants affecting the gene represented in this entry.</text>
</comment>
<comment type="disease" evidence="15 16">
    <disease id="DI-04444">
        <name>Brugada syndrome 9</name>
        <acronym>BRGDA9</acronym>
        <description>A tachyarrhythmia characterized by right bundle branch block and ST segment elevation on an electrocardiogram (ECG). It can cause the ventricles to beat so fast that the blood is prevented from circulating efficiently in the body. When this situation occurs, the individual will faint and may die in a few minutes if the heart is not reset.</description>
        <dbReference type="MIM" id="616399"/>
    </disease>
    <text>The gene represented in this entry may be involved in disease pathogenesis.</text>
</comment>
<comment type="similarity">
    <text evidence="26">Belongs to the potassium channel family. D (Shal) (TC 1.A.1.2) subfamily. Kv4.3/KCND3 sub-subfamily.</text>
</comment>
<comment type="online information" name="Potassium voltage-gated channel, Shal-related subfamily, member 3 (KCND3)">
    <link uri="https://databases.lovd.nl/shared/genes/KCND3"/>
    <text>Leiden Open Variation Database (LOVD)</text>
</comment>